<keyword id="KW-0678">Repressor</keyword>
<keyword id="KW-0687">Ribonucleoprotein</keyword>
<keyword id="KW-0689">Ribosomal protein</keyword>
<keyword id="KW-0694">RNA-binding</keyword>
<keyword id="KW-0699">rRNA-binding</keyword>
<keyword id="KW-0810">Translation regulation</keyword>
<keyword id="KW-0820">tRNA-binding</keyword>
<sequence>MAKLTKRQKAIAAAVEANKVYTLEEAVQVLNSLPAAKFKESLDISVNLGVDPRKSDQVVRGATTLPAGTGKTVRVAVFAQGAQAEAAKEAGADVVGFDDLAESIQGGNLDFDVVIAAPDAMRVVGKLGTILGPRGLMPNPKVGTVTPDVAGAVKNAKSGQARYRVDKAGIIHAAIGQVGFDAAAIRQNVETLVADLEKLKPATSKGVYIKKITLSSTMGPGLTVDVNNVSN</sequence>
<accession>B7I357</accession>
<evidence type="ECO:0000255" key="1">
    <source>
        <dbReference type="HAMAP-Rule" id="MF_01318"/>
    </source>
</evidence>
<evidence type="ECO:0000305" key="2"/>
<name>RL1_ACIB5</name>
<reference key="1">
    <citation type="journal article" date="2008" name="J. Bacteriol.">
        <title>Comparative genome sequence analysis of multidrug-resistant Acinetobacter baumannii.</title>
        <authorList>
            <person name="Adams M.D."/>
            <person name="Goglin K."/>
            <person name="Molyneaux N."/>
            <person name="Hujer K.M."/>
            <person name="Lavender H."/>
            <person name="Jamison J.J."/>
            <person name="MacDonald I.J."/>
            <person name="Martin K.M."/>
            <person name="Russo T."/>
            <person name="Campagnari A.A."/>
            <person name="Hujer A.M."/>
            <person name="Bonomo R.A."/>
            <person name="Gill S.R."/>
        </authorList>
    </citation>
    <scope>NUCLEOTIDE SEQUENCE [LARGE SCALE GENOMIC DNA]</scope>
    <source>
        <strain>AB0057</strain>
    </source>
</reference>
<dbReference type="EMBL" id="CP001182">
    <property type="protein sequence ID" value="ACJ39792.1"/>
    <property type="molecule type" value="Genomic_DNA"/>
</dbReference>
<dbReference type="SMR" id="B7I357"/>
<dbReference type="KEGG" id="abn:AB57_0366"/>
<dbReference type="HOGENOM" id="CLU_062853_0_0_6"/>
<dbReference type="Proteomes" id="UP000007094">
    <property type="component" value="Chromosome"/>
</dbReference>
<dbReference type="GO" id="GO:0022625">
    <property type="term" value="C:cytosolic large ribosomal subunit"/>
    <property type="evidence" value="ECO:0007669"/>
    <property type="project" value="TreeGrafter"/>
</dbReference>
<dbReference type="GO" id="GO:0019843">
    <property type="term" value="F:rRNA binding"/>
    <property type="evidence" value="ECO:0007669"/>
    <property type="project" value="UniProtKB-UniRule"/>
</dbReference>
<dbReference type="GO" id="GO:0003735">
    <property type="term" value="F:structural constituent of ribosome"/>
    <property type="evidence" value="ECO:0007669"/>
    <property type="project" value="InterPro"/>
</dbReference>
<dbReference type="GO" id="GO:0000049">
    <property type="term" value="F:tRNA binding"/>
    <property type="evidence" value="ECO:0007669"/>
    <property type="project" value="UniProtKB-KW"/>
</dbReference>
<dbReference type="GO" id="GO:0006417">
    <property type="term" value="P:regulation of translation"/>
    <property type="evidence" value="ECO:0007669"/>
    <property type="project" value="UniProtKB-KW"/>
</dbReference>
<dbReference type="GO" id="GO:0006412">
    <property type="term" value="P:translation"/>
    <property type="evidence" value="ECO:0007669"/>
    <property type="project" value="UniProtKB-UniRule"/>
</dbReference>
<dbReference type="CDD" id="cd00403">
    <property type="entry name" value="Ribosomal_L1"/>
    <property type="match status" value="1"/>
</dbReference>
<dbReference type="FunFam" id="3.40.50.790:FF:000001">
    <property type="entry name" value="50S ribosomal protein L1"/>
    <property type="match status" value="1"/>
</dbReference>
<dbReference type="Gene3D" id="3.30.190.20">
    <property type="match status" value="1"/>
</dbReference>
<dbReference type="Gene3D" id="3.40.50.790">
    <property type="match status" value="1"/>
</dbReference>
<dbReference type="HAMAP" id="MF_01318_B">
    <property type="entry name" value="Ribosomal_uL1_B"/>
    <property type="match status" value="1"/>
</dbReference>
<dbReference type="InterPro" id="IPR005878">
    <property type="entry name" value="Ribosom_uL1_bac-type"/>
</dbReference>
<dbReference type="InterPro" id="IPR002143">
    <property type="entry name" value="Ribosomal_uL1"/>
</dbReference>
<dbReference type="InterPro" id="IPR023674">
    <property type="entry name" value="Ribosomal_uL1-like"/>
</dbReference>
<dbReference type="InterPro" id="IPR028364">
    <property type="entry name" value="Ribosomal_uL1/biogenesis"/>
</dbReference>
<dbReference type="InterPro" id="IPR016095">
    <property type="entry name" value="Ribosomal_uL1_3-a/b-sand"/>
</dbReference>
<dbReference type="InterPro" id="IPR023673">
    <property type="entry name" value="Ribosomal_uL1_CS"/>
</dbReference>
<dbReference type="NCBIfam" id="TIGR01169">
    <property type="entry name" value="rplA_bact"/>
    <property type="match status" value="1"/>
</dbReference>
<dbReference type="PANTHER" id="PTHR36427">
    <property type="entry name" value="54S RIBOSOMAL PROTEIN L1, MITOCHONDRIAL"/>
    <property type="match status" value="1"/>
</dbReference>
<dbReference type="PANTHER" id="PTHR36427:SF3">
    <property type="entry name" value="LARGE RIBOSOMAL SUBUNIT PROTEIN UL1M"/>
    <property type="match status" value="1"/>
</dbReference>
<dbReference type="Pfam" id="PF00687">
    <property type="entry name" value="Ribosomal_L1"/>
    <property type="match status" value="1"/>
</dbReference>
<dbReference type="PIRSF" id="PIRSF002155">
    <property type="entry name" value="Ribosomal_L1"/>
    <property type="match status" value="1"/>
</dbReference>
<dbReference type="SUPFAM" id="SSF56808">
    <property type="entry name" value="Ribosomal protein L1"/>
    <property type="match status" value="1"/>
</dbReference>
<dbReference type="PROSITE" id="PS01199">
    <property type="entry name" value="RIBOSOMAL_L1"/>
    <property type="match status" value="1"/>
</dbReference>
<proteinExistence type="inferred from homology"/>
<organism>
    <name type="scientific">Acinetobacter baumannii (strain AB0057)</name>
    <dbReference type="NCBI Taxonomy" id="480119"/>
    <lineage>
        <taxon>Bacteria</taxon>
        <taxon>Pseudomonadati</taxon>
        <taxon>Pseudomonadota</taxon>
        <taxon>Gammaproteobacteria</taxon>
        <taxon>Moraxellales</taxon>
        <taxon>Moraxellaceae</taxon>
        <taxon>Acinetobacter</taxon>
        <taxon>Acinetobacter calcoaceticus/baumannii complex</taxon>
    </lineage>
</organism>
<feature type="chain" id="PRO_1000141345" description="Large ribosomal subunit protein uL1">
    <location>
        <begin position="1"/>
        <end position="231"/>
    </location>
</feature>
<comment type="function">
    <text evidence="1">Binds directly to 23S rRNA. The L1 stalk is quite mobile in the ribosome, and is involved in E site tRNA release.</text>
</comment>
<comment type="function">
    <text evidence="1">Protein L1 is also a translational repressor protein, it controls the translation of the L11 operon by binding to its mRNA.</text>
</comment>
<comment type="subunit">
    <text evidence="1">Part of the 50S ribosomal subunit.</text>
</comment>
<comment type="similarity">
    <text evidence="1">Belongs to the universal ribosomal protein uL1 family.</text>
</comment>
<protein>
    <recommendedName>
        <fullName evidence="1">Large ribosomal subunit protein uL1</fullName>
    </recommendedName>
    <alternativeName>
        <fullName evidence="2">50S ribosomal protein L1</fullName>
    </alternativeName>
</protein>
<gene>
    <name evidence="1" type="primary">rplA</name>
    <name type="ordered locus">AB57_0366</name>
</gene>